<evidence type="ECO:0000269" key="1">
    <source>
    </source>
</evidence>
<evidence type="ECO:0000269" key="2">
    <source>
    </source>
</evidence>
<evidence type="ECO:0000269" key="3">
    <source ref="3"/>
</evidence>
<evidence type="ECO:0000303" key="4">
    <source>
    </source>
</evidence>
<evidence type="ECO:0000303" key="5">
    <source>
    </source>
</evidence>
<evidence type="ECO:0000305" key="6"/>
<evidence type="ECO:0000312" key="7">
    <source>
        <dbReference type="PDB" id="1JMP"/>
    </source>
</evidence>
<evidence type="ECO:0007744" key="8">
    <source>
        <dbReference type="PDB" id="1JMP"/>
    </source>
</evidence>
<evidence type="ECO:0007744" key="9">
    <source>
        <dbReference type="PDB" id="2V9B"/>
    </source>
</evidence>
<evidence type="ECO:0007829" key="10">
    <source>
        <dbReference type="PDB" id="1JMP"/>
    </source>
</evidence>
<evidence type="ECO:0007829" key="11">
    <source>
        <dbReference type="PDB" id="2V9B"/>
    </source>
</evidence>
<reference key="1">
    <citation type="journal article" date="1991" name="Eur. J. Biochem.">
        <title>Isolation and characterization of cDNAs encoding viscotoxins of mistletoe (Viscum album).</title>
        <authorList>
            <person name="Schrader G."/>
            <person name="Apel K."/>
        </authorList>
    </citation>
    <scope>NUCLEOTIDE SEQUENCE [MRNA]</scope>
</reference>
<reference key="2">
    <citation type="journal article" date="1971" name="Eur. J. Biochem.">
        <title>The amino acid sequence of viscotoxin B from the European mistletoe (Viscum album L, loranthaceae).</title>
        <authorList>
            <person name="Samuelsson G."/>
            <person name="Pettersson B.M."/>
        </authorList>
    </citation>
    <scope>PROTEIN SEQUENCE OF 7-52</scope>
    <scope>SUBCELLULAR LOCATION</scope>
</reference>
<reference key="3">
    <citation type="submission" date="2004-09" db="UniProtKB">
        <authorList>
            <person name="Kahle B."/>
            <person name="Debreczeni J.E."/>
            <person name="Sheldrick G.M."/>
            <person name="Zeeck A."/>
        </authorList>
    </citation>
    <scope>PROTEIN SEQUENCE OF 7-52</scope>
    <scope>FUNCTION</scope>
    <scope>MASS SPECTROMETRY</scope>
    <scope>SUBCELLULAR LOCATION</scope>
</reference>
<reference evidence="7" key="4">
    <citation type="journal article" date="2003" name="Biochem. J.">
        <title>Comparative membrane interaction study of viscotoxins A3, A2 and B from mistletoe (Viscum album) and connections with their structures.</title>
        <authorList>
            <person name="Coulon A."/>
            <person name="Mosbah A."/>
            <person name="Lopez A."/>
            <person name="Sautereau A.-M."/>
            <person name="Schaller G."/>
            <person name="Urech K."/>
            <person name="Rouge P."/>
            <person name="Darbon H."/>
        </authorList>
    </citation>
    <scope>STRUCTURE BY NMR OF 7-52</scope>
    <scope>DISULFIDE BONDS</scope>
</reference>
<name>THNB_VISAL</name>
<keyword id="KW-0002">3D-structure</keyword>
<keyword id="KW-0903">Direct protein sequencing</keyword>
<keyword id="KW-1015">Disulfide bond</keyword>
<keyword id="KW-0611">Plant defense</keyword>
<keyword id="KW-0964">Secreted</keyword>
<keyword id="KW-0732">Signal</keyword>
<keyword id="KW-0800">Toxin</keyword>
<protein>
    <recommendedName>
        <fullName evidence="5">Viscotoxin-B</fullName>
    </recommendedName>
    <alternativeName>
        <fullName>Viscotoxin-B2</fullName>
    </alternativeName>
</protein>
<gene>
    <name type="primary">THI2.2</name>
</gene>
<dbReference type="PIR" id="A91187">
    <property type="entry name" value="VTVAB"/>
</dbReference>
<dbReference type="PDB" id="1JMP">
    <property type="method" value="NMR"/>
    <property type="chains" value="A=7-52"/>
</dbReference>
<dbReference type="PDB" id="2V9B">
    <property type="method" value="X-ray"/>
    <property type="resolution" value="1.05 A"/>
    <property type="chains" value="A/B=7-52"/>
</dbReference>
<dbReference type="PDBsum" id="1JMP"/>
<dbReference type="PDBsum" id="2V9B"/>
<dbReference type="SMR" id="P08943"/>
<dbReference type="TCDB" id="1.C.44.1.2">
    <property type="family name" value="the plant thionine (pt) family"/>
</dbReference>
<dbReference type="EvolutionaryTrace" id="P08943"/>
<dbReference type="GO" id="GO:0005576">
    <property type="term" value="C:extracellular region"/>
    <property type="evidence" value="ECO:0007669"/>
    <property type="project" value="UniProtKB-SubCell"/>
</dbReference>
<dbReference type="GO" id="GO:0090729">
    <property type="term" value="F:toxin activity"/>
    <property type="evidence" value="ECO:0007669"/>
    <property type="project" value="UniProtKB-KW"/>
</dbReference>
<dbReference type="GO" id="GO:0006952">
    <property type="term" value="P:defense response"/>
    <property type="evidence" value="ECO:0007669"/>
    <property type="project" value="UniProtKB-KW"/>
</dbReference>
<dbReference type="FunFam" id="3.30.1350.10:FF:000001">
    <property type="entry name" value="Hellethionin-D"/>
    <property type="match status" value="1"/>
</dbReference>
<dbReference type="Gene3D" id="3.30.1350.10">
    <property type="entry name" value="Thionin-like"/>
    <property type="match status" value="1"/>
</dbReference>
<dbReference type="InterPro" id="IPR001010">
    <property type="entry name" value="Thionin"/>
</dbReference>
<dbReference type="InterPro" id="IPR036391">
    <property type="entry name" value="Thionin-like_sf"/>
</dbReference>
<dbReference type="PANTHER" id="PTHR33920">
    <property type="entry name" value="THIONIN-2.1-RELATED"/>
    <property type="match status" value="1"/>
</dbReference>
<dbReference type="PANTHER" id="PTHR33920:SF2">
    <property type="entry name" value="THIONIN-2.1-RELATED"/>
    <property type="match status" value="1"/>
</dbReference>
<dbReference type="Pfam" id="PF00321">
    <property type="entry name" value="Thionin"/>
    <property type="match status" value="1"/>
</dbReference>
<dbReference type="PRINTS" id="PR00287">
    <property type="entry name" value="THIONIN"/>
</dbReference>
<dbReference type="SUPFAM" id="SSF57429">
    <property type="entry name" value="Crambin-like"/>
    <property type="match status" value="1"/>
</dbReference>
<dbReference type="PROSITE" id="PS00271">
    <property type="entry name" value="THIONIN"/>
    <property type="match status" value="1"/>
</dbReference>
<organism>
    <name type="scientific">Viscum album</name>
    <name type="common">European mistletoe</name>
    <dbReference type="NCBI Taxonomy" id="3972"/>
    <lineage>
        <taxon>Eukaryota</taxon>
        <taxon>Viridiplantae</taxon>
        <taxon>Streptophyta</taxon>
        <taxon>Embryophyta</taxon>
        <taxon>Tracheophyta</taxon>
        <taxon>Spermatophyta</taxon>
        <taxon>Magnoliopsida</taxon>
        <taxon>eudicotyledons</taxon>
        <taxon>Gunneridae</taxon>
        <taxon>Pentapetalae</taxon>
        <taxon>Santalales</taxon>
        <taxon>Viscaceae</taxon>
        <taxon>Viscum</taxon>
    </lineage>
</organism>
<proteinExistence type="evidence at protein level"/>
<feature type="signal peptide" evidence="2 3">
    <location>
        <begin position="1" status="less than"/>
        <end position="6"/>
    </location>
</feature>
<feature type="chain" id="PRO_0000034134" description="Viscotoxin-B">
    <location>
        <begin position="7"/>
        <end position="52"/>
    </location>
</feature>
<feature type="propeptide" id="PRO_0000034135" description="Acidic domain" evidence="6">
    <location>
        <begin position="53"/>
        <end position="103"/>
    </location>
</feature>
<feature type="disulfide bond" evidence="1 8 9">
    <location>
        <begin position="9"/>
        <end position="46"/>
    </location>
</feature>
<feature type="disulfide bond" evidence="1 8 9">
    <location>
        <begin position="10"/>
        <end position="38"/>
    </location>
</feature>
<feature type="disulfide bond" evidence="1 8 9">
    <location>
        <begin position="22"/>
        <end position="32"/>
    </location>
</feature>
<feature type="sequence conflict" description="In Ref. 3; AA sequence." evidence="6" ref="3">
    <original>N</original>
    <variation>D</variation>
    <location>
        <position position="17"/>
    </location>
</feature>
<feature type="sequence conflict" description="In Ref. 2; AA sequence." evidence="6" ref="2">
    <original>DYP</original>
    <variation>YPD</variation>
    <location>
        <begin position="49"/>
        <end position="51"/>
    </location>
</feature>
<feature type="non-terminal residue" evidence="4">
    <location>
        <position position="1"/>
    </location>
</feature>
<feature type="strand" evidence="11">
    <location>
        <begin position="8"/>
        <end position="12"/>
    </location>
</feature>
<feature type="helix" evidence="11">
    <location>
        <begin position="13"/>
        <end position="24"/>
    </location>
</feature>
<feature type="helix" evidence="11">
    <location>
        <begin position="29"/>
        <end position="36"/>
    </location>
</feature>
<feature type="strand" evidence="11">
    <location>
        <begin position="42"/>
        <end position="45"/>
    </location>
</feature>
<feature type="strand" evidence="10">
    <location>
        <begin position="47"/>
        <end position="49"/>
    </location>
</feature>
<accession>P08943</accession>
<accession>P01536</accession>
<accession>P84186</accession>
<comment type="function">
    <text evidence="3">Thionins are small plant proteins which are toxic to animal cells. They seem to exert their toxic effect at the level of the cell membrane. Their precise function is not known.</text>
</comment>
<comment type="subcellular location">
    <subcellularLocation>
        <location evidence="2 3">Secreted</location>
    </subcellularLocation>
</comment>
<comment type="mass spectrometry" mass="4852.5" method="Electrospray" evidence="3">
    <molecule>Viscotoxin-B</molecule>
</comment>
<comment type="similarity">
    <text evidence="6">Belongs to the plant thionin (TC 1.C.44) family.</text>
</comment>
<sequence length="103" mass="11008">FRNVESKSCCPNTTGRNIYNTCRLGGGSRERCASLSGCKIISASTCPSDYPKFYCTLGCQSSKCASITTPPNSEVDAEAVRCKAACSNLCDFGVTTNQEIQDD</sequence>